<proteinExistence type="inferred from homology"/>
<feature type="propeptide" id="PRO_0000397304" description="Removed in mature form; by autocatalysis" evidence="1">
    <location>
        <begin position="1"/>
        <end position="49"/>
    </location>
</feature>
<feature type="chain" id="PRO_0000397305" description="Proteasome subunit beta">
    <location>
        <begin position="50"/>
        <end position="243"/>
    </location>
</feature>
<feature type="region of interest" description="Disordered" evidence="2">
    <location>
        <begin position="1"/>
        <end position="40"/>
    </location>
</feature>
<feature type="active site" description="Nucleophile" evidence="1">
    <location>
        <position position="50"/>
    </location>
</feature>
<reference key="1">
    <citation type="journal article" date="2006" name="BMC Genomics">
        <title>The genome of the square archaeon Haloquadratum walsbyi: life at the limits of water activity.</title>
        <authorList>
            <person name="Bolhuis H."/>
            <person name="Palm P."/>
            <person name="Wende A."/>
            <person name="Falb M."/>
            <person name="Rampp M."/>
            <person name="Rodriguez-Valera F."/>
            <person name="Pfeiffer F."/>
            <person name="Oesterhelt D."/>
        </authorList>
    </citation>
    <scope>NUCLEOTIDE SEQUENCE [LARGE SCALE GENOMIC DNA]</scope>
    <source>
        <strain>DSM 16790 / HBSQ001</strain>
    </source>
</reference>
<name>PSB_HALWD</name>
<comment type="function">
    <text evidence="1">Component of the proteasome core, a large protease complex with broad specificity involved in protein degradation.</text>
</comment>
<comment type="catalytic activity">
    <reaction evidence="1">
        <text>Cleavage of peptide bonds with very broad specificity.</text>
        <dbReference type="EC" id="3.4.25.1"/>
    </reaction>
</comment>
<comment type="activity regulation">
    <text evidence="1">The formation of the proteasomal ATPase PAN-20S proteasome complex, via the docking of the C-termini of PAN into the intersubunit pockets in the alpha-rings, triggers opening of the gate for substrate entry. Interconversion between the open-gate and close-gate conformations leads to a dynamic regulation of the 20S proteasome proteolysis activity.</text>
</comment>
<comment type="subunit">
    <text evidence="1">The 20S proteasome core is composed of 14 alpha and 14 beta subunits that assemble into four stacked heptameric rings, resulting in a barrel-shaped structure. The two inner rings, each composed of seven catalytic beta subunits, are sandwiched by two outer rings, each composed of seven alpha subunits. The catalytic chamber with the active sites is on the inside of the barrel. Has a gated structure, the ends of the cylinder being occluded by the N-termini of the alpha-subunits. Is capped at one or both ends by the proteasome regulatory ATPase, PAN.</text>
</comment>
<comment type="subcellular location">
    <subcellularLocation>
        <location evidence="1">Cytoplasm</location>
    </subcellularLocation>
</comment>
<comment type="similarity">
    <text evidence="1">Belongs to the peptidase T1B family.</text>
</comment>
<dbReference type="EC" id="3.4.25.1" evidence="1"/>
<dbReference type="EMBL" id="AM180088">
    <property type="protein sequence ID" value="CAJ52772.1"/>
    <property type="molecule type" value="Genomic_DNA"/>
</dbReference>
<dbReference type="RefSeq" id="WP_011571888.1">
    <property type="nucleotide sequence ID" value="NC_008212.1"/>
</dbReference>
<dbReference type="SMR" id="Q18GX3"/>
<dbReference type="STRING" id="362976.HQ_2661A"/>
<dbReference type="MEROPS" id="T01.002"/>
<dbReference type="GeneID" id="4194516"/>
<dbReference type="KEGG" id="hwa:HQ_2661A"/>
<dbReference type="eggNOG" id="arCOG00970">
    <property type="taxonomic scope" value="Archaea"/>
</dbReference>
<dbReference type="HOGENOM" id="CLU_035750_7_2_2"/>
<dbReference type="Proteomes" id="UP000001975">
    <property type="component" value="Chromosome"/>
</dbReference>
<dbReference type="GO" id="GO:0005737">
    <property type="term" value="C:cytoplasm"/>
    <property type="evidence" value="ECO:0007669"/>
    <property type="project" value="UniProtKB-SubCell"/>
</dbReference>
<dbReference type="GO" id="GO:0019774">
    <property type="term" value="C:proteasome core complex, beta-subunit complex"/>
    <property type="evidence" value="ECO:0007669"/>
    <property type="project" value="UniProtKB-UniRule"/>
</dbReference>
<dbReference type="GO" id="GO:0004298">
    <property type="term" value="F:threonine-type endopeptidase activity"/>
    <property type="evidence" value="ECO:0007669"/>
    <property type="project" value="UniProtKB-UniRule"/>
</dbReference>
<dbReference type="GO" id="GO:0010498">
    <property type="term" value="P:proteasomal protein catabolic process"/>
    <property type="evidence" value="ECO:0007669"/>
    <property type="project" value="UniProtKB-UniRule"/>
</dbReference>
<dbReference type="CDD" id="cd03764">
    <property type="entry name" value="proteasome_beta_archeal"/>
    <property type="match status" value="1"/>
</dbReference>
<dbReference type="FunFam" id="3.60.20.10:FF:000049">
    <property type="entry name" value="Proteasome subunit beta"/>
    <property type="match status" value="1"/>
</dbReference>
<dbReference type="Gene3D" id="3.60.20.10">
    <property type="entry name" value="Glutamine Phosphoribosylpyrophosphate, subunit 1, domain 1"/>
    <property type="match status" value="1"/>
</dbReference>
<dbReference type="HAMAP" id="MF_02113_A">
    <property type="entry name" value="Proteasome_B_A"/>
    <property type="match status" value="1"/>
</dbReference>
<dbReference type="InterPro" id="IPR029055">
    <property type="entry name" value="Ntn_hydrolases_N"/>
</dbReference>
<dbReference type="InterPro" id="IPR019983">
    <property type="entry name" value="Pept_T1A_Psome_bsu_arc"/>
</dbReference>
<dbReference type="InterPro" id="IPR000243">
    <property type="entry name" value="Pept_T1A_subB"/>
</dbReference>
<dbReference type="InterPro" id="IPR001353">
    <property type="entry name" value="Proteasome_sua/b"/>
</dbReference>
<dbReference type="InterPro" id="IPR023333">
    <property type="entry name" value="Proteasome_suB-type"/>
</dbReference>
<dbReference type="NCBIfam" id="TIGR03634">
    <property type="entry name" value="arc_protsome_B"/>
    <property type="match status" value="1"/>
</dbReference>
<dbReference type="PANTHER" id="PTHR32194:SF0">
    <property type="entry name" value="ATP-DEPENDENT PROTEASE SUBUNIT HSLV"/>
    <property type="match status" value="1"/>
</dbReference>
<dbReference type="PANTHER" id="PTHR32194">
    <property type="entry name" value="METALLOPROTEASE TLDD"/>
    <property type="match status" value="1"/>
</dbReference>
<dbReference type="Pfam" id="PF00227">
    <property type="entry name" value="Proteasome"/>
    <property type="match status" value="1"/>
</dbReference>
<dbReference type="PRINTS" id="PR00141">
    <property type="entry name" value="PROTEASOME"/>
</dbReference>
<dbReference type="SUPFAM" id="SSF56235">
    <property type="entry name" value="N-terminal nucleophile aminohydrolases (Ntn hydrolases)"/>
    <property type="match status" value="1"/>
</dbReference>
<dbReference type="PROSITE" id="PS51476">
    <property type="entry name" value="PROTEASOME_BETA_2"/>
    <property type="match status" value="1"/>
</dbReference>
<sequence length="243" mass="26023">MRTPMNNDISGRPDSLNGDRSDVFSPELGEFPNADDRANDIGDMETKTGTTTVGLKTQDGTVLATDMRASLGRMVSSKDVQKVEEIHPTGALTIAGSVSAAQSLISSIRAEVRLYEARRGEDMSMEALSTLLGNFLRSGGFFIVQPILGGVDDDGPHIYSIDPAGSIIEEEYTVTGSGSQYALGVLEQQYNEDLSIEEAKTVAARSIESAVERDLASGNGINVCVVTEDGVEITQHEDFEELV</sequence>
<evidence type="ECO:0000255" key="1">
    <source>
        <dbReference type="HAMAP-Rule" id="MF_02113"/>
    </source>
</evidence>
<evidence type="ECO:0000256" key="2">
    <source>
        <dbReference type="SAM" id="MobiDB-lite"/>
    </source>
</evidence>
<gene>
    <name evidence="1" type="primary">psmB</name>
    <name type="ordered locus">HQ_2661A</name>
</gene>
<protein>
    <recommendedName>
        <fullName evidence="1">Proteasome subunit beta</fullName>
        <ecNumber evidence="1">3.4.25.1</ecNumber>
    </recommendedName>
    <alternativeName>
        <fullName evidence="1">20S proteasome beta subunit</fullName>
    </alternativeName>
    <alternativeName>
        <fullName evidence="1">Proteasome core protein PsmB</fullName>
    </alternativeName>
</protein>
<accession>Q18GX3</accession>
<keyword id="KW-0068">Autocatalytic cleavage</keyword>
<keyword id="KW-0963">Cytoplasm</keyword>
<keyword id="KW-0378">Hydrolase</keyword>
<keyword id="KW-0645">Protease</keyword>
<keyword id="KW-0647">Proteasome</keyword>
<keyword id="KW-1185">Reference proteome</keyword>
<keyword id="KW-0888">Threonine protease</keyword>
<keyword id="KW-0865">Zymogen</keyword>
<organism>
    <name type="scientific">Haloquadratum walsbyi (strain DSM 16790 / HBSQ001)</name>
    <dbReference type="NCBI Taxonomy" id="362976"/>
    <lineage>
        <taxon>Archaea</taxon>
        <taxon>Methanobacteriati</taxon>
        <taxon>Methanobacteriota</taxon>
        <taxon>Stenosarchaea group</taxon>
        <taxon>Halobacteria</taxon>
        <taxon>Halobacteriales</taxon>
        <taxon>Haloferacaceae</taxon>
        <taxon>Haloquadratum</taxon>
    </lineage>
</organism>